<dbReference type="GO" id="GO:0007608">
    <property type="term" value="P:sensory perception of smell"/>
    <property type="evidence" value="ECO:0007669"/>
    <property type="project" value="UniProtKB-KW"/>
</dbReference>
<reference key="1">
    <citation type="journal article" date="1998" name="Biochem. Biophys. Res. Commun.">
        <title>Functional characterization of a new class of odorant-binding proteins in the moth Mamestra brassicae.</title>
        <authorList>
            <person name="Bohbot J."/>
            <person name="Sobrio F."/>
            <person name="Lucas P."/>
            <person name="Nagnan-Le Meillour P."/>
        </authorList>
    </citation>
    <scope>PROTEIN SEQUENCE</scope>
    <source>
        <tissue>Antenna</tissue>
    </source>
</reference>
<comment type="tissue specificity">
    <text>Antenna.</text>
</comment>
<organism>
    <name type="scientific">Mamestra brassicae</name>
    <name type="common">Cabbage moth</name>
    <dbReference type="NCBI Taxonomy" id="55057"/>
    <lineage>
        <taxon>Eukaryota</taxon>
        <taxon>Metazoa</taxon>
        <taxon>Ecdysozoa</taxon>
        <taxon>Arthropoda</taxon>
        <taxon>Hexapoda</taxon>
        <taxon>Insecta</taxon>
        <taxon>Pterygota</taxon>
        <taxon>Neoptera</taxon>
        <taxon>Endopterygota</taxon>
        <taxon>Lepidoptera</taxon>
        <taxon>Glossata</taxon>
        <taxon>Ditrysia</taxon>
        <taxon>Noctuoidea</taxon>
        <taxon>Noctuidae</taxon>
        <taxon>Hadeninae</taxon>
        <taxon>Mamestra</taxon>
    </lineage>
</organism>
<accession>P81285</accession>
<feature type="chain" id="PRO_0000074486" description="Antennal odorant-binding protein">
    <location>
        <begin position="1"/>
        <end position="15" status="greater than"/>
    </location>
</feature>
<feature type="non-terminal residue">
    <location>
        <position position="15"/>
    </location>
</feature>
<keyword id="KW-0903">Direct protein sequencing</keyword>
<keyword id="KW-0552">Olfaction</keyword>
<keyword id="KW-0716">Sensory transduction</keyword>
<keyword id="KW-0813">Transport</keyword>
<sequence length="15" mass="1875">EDKYTDKYDNINLDE</sequence>
<protein>
    <recommendedName>
        <fullName>Antennal odorant-binding protein</fullName>
        <shortName>AOBP</shortName>
    </recommendedName>
</protein>
<name>OBPA_MAMBR</name>
<proteinExistence type="evidence at protein level"/>